<feature type="chain" id="PRO_0000324814" description="3-oxoacyl-[acyl-carrier-protein] synthase 2">
    <location>
        <begin position="1"/>
        <end position="414"/>
    </location>
</feature>
<feature type="domain" description="Ketosynthase family 3 (KS3)" evidence="2">
    <location>
        <begin position="3"/>
        <end position="411"/>
    </location>
</feature>
<feature type="active site" description="For beta-ketoacyl synthase activity" evidence="2">
    <location>
        <position position="164"/>
    </location>
</feature>
<feature type="active site" description="For beta-ketoacyl synthase activity" evidence="2">
    <location>
        <position position="304"/>
    </location>
</feature>
<feature type="active site" description="For beta-ketoacyl synthase activity" evidence="2">
    <location>
        <position position="341"/>
    </location>
</feature>
<comment type="function">
    <text evidence="1">Involved in the type II fatty acid elongation cycle. Catalyzes the elongation of a wide range of acyl-ACP by the addition of two carbons from malonyl-ACP to an acyl acceptor. Can efficiently catalyze the conversion of palmitoleoyl-ACP (cis-hexadec-9-enoyl-ACP) to cis-vaccenoyl-ACP (cis-octadec-11-enoyl-ACP), an essential step in the thermal regulation of fatty acid composition.</text>
</comment>
<comment type="catalytic activity">
    <reaction evidence="1">
        <text>a fatty acyl-[ACP] + malonyl-[ACP] + H(+) = a 3-oxoacyl-[ACP] + holo-[ACP] + CO2</text>
        <dbReference type="Rhea" id="RHEA:22836"/>
        <dbReference type="Rhea" id="RHEA-COMP:9623"/>
        <dbReference type="Rhea" id="RHEA-COMP:9685"/>
        <dbReference type="Rhea" id="RHEA-COMP:9916"/>
        <dbReference type="Rhea" id="RHEA-COMP:14125"/>
        <dbReference type="ChEBI" id="CHEBI:15378"/>
        <dbReference type="ChEBI" id="CHEBI:16526"/>
        <dbReference type="ChEBI" id="CHEBI:64479"/>
        <dbReference type="ChEBI" id="CHEBI:78449"/>
        <dbReference type="ChEBI" id="CHEBI:78776"/>
        <dbReference type="ChEBI" id="CHEBI:138651"/>
    </reaction>
</comment>
<comment type="catalytic activity">
    <reaction evidence="1">
        <text>(9Z)-hexadecenoyl-[ACP] + malonyl-[ACP] + H(+) = 3-oxo-(11Z)-octadecenoyl-[ACP] + holo-[ACP] + CO2</text>
        <dbReference type="Rhea" id="RHEA:55040"/>
        <dbReference type="Rhea" id="RHEA-COMP:9623"/>
        <dbReference type="Rhea" id="RHEA-COMP:9685"/>
        <dbReference type="Rhea" id="RHEA-COMP:10800"/>
        <dbReference type="Rhea" id="RHEA-COMP:14074"/>
        <dbReference type="ChEBI" id="CHEBI:15378"/>
        <dbReference type="ChEBI" id="CHEBI:16526"/>
        <dbReference type="ChEBI" id="CHEBI:64479"/>
        <dbReference type="ChEBI" id="CHEBI:78449"/>
        <dbReference type="ChEBI" id="CHEBI:83989"/>
        <dbReference type="ChEBI" id="CHEBI:138538"/>
        <dbReference type="EC" id="2.3.1.179"/>
    </reaction>
</comment>
<comment type="pathway">
    <text evidence="1">Lipid metabolism; fatty acid biosynthesis.</text>
</comment>
<comment type="subunit">
    <text evidence="1">Homodimer.</text>
</comment>
<comment type="developmental stage">
    <text evidence="3">More than twofold more abundant in the large cell variant (LCV) stage than in the small cell variant (SCV) stage (at protein level). LCVs are more metabolically active than SCVs.</text>
</comment>
<comment type="similarity">
    <text evidence="4">Belongs to the thiolase-like superfamily. Beta-ketoacyl-ACP synthases family.</text>
</comment>
<sequence length="414" mass="44075">MEKRRVVITGLGVVSPLGNKVSDMWQALLAGKSGVKPITRFDASSFPTQIAAEVRDFDPALVLDLKSIRKTDVFVQFAMESARQAWEDSGLEINETNAPRVGVAIGSGIGGMPWIEKNYDALLTSGPRKISPFFIPGAIINMASGMVSIKYDLKGPNISIVTACTTGLHNIGHAARMIAHNDADAMIAGGTEMASTPLGIGGFAAVRALSTRNDEPEKASRPWDKGRDGFVLGEGAACVVVEELEHAKKRNATIYAEIIGFGMSGDAYHMTRPDPEAEGFTTCMKNSLRDAGIAPERVDYINAHGTSTPAADPLEARAIKKTFGDHAYKLAVSSTKSMTGHMLGAAGALETVISVLAIRDNTAPPTINLENPDEGCDLDFVPNEAREMKIDTVMSNSFGFGGTNGTLVLSRVFD</sequence>
<protein>
    <recommendedName>
        <fullName>3-oxoacyl-[acyl-carrier-protein] synthase 2</fullName>
        <ecNumber evidence="1">2.3.1.179</ecNumber>
    </recommendedName>
    <alternativeName>
        <fullName>3-oxoacyl-[acyl-carrier-protein] synthase II</fullName>
    </alternativeName>
    <alternativeName>
        <fullName>Beta-ketoacyl-ACP synthase II</fullName>
        <shortName>KAS II</shortName>
    </alternativeName>
</protein>
<dbReference type="EC" id="2.3.1.179" evidence="1"/>
<dbReference type="EMBL" id="AE016828">
    <property type="protein sequence ID" value="AAO90045.1"/>
    <property type="molecule type" value="Genomic_DNA"/>
</dbReference>
<dbReference type="RefSeq" id="NP_819531.1">
    <property type="nucleotide sequence ID" value="NC_002971.4"/>
</dbReference>
<dbReference type="RefSeq" id="WP_010957615.1">
    <property type="nucleotide sequence ID" value="NZ_CCYB01000053.1"/>
</dbReference>
<dbReference type="SMR" id="Q83E37"/>
<dbReference type="STRING" id="227377.CBU_0497"/>
<dbReference type="EnsemblBacteria" id="AAO90045">
    <property type="protein sequence ID" value="AAO90045"/>
    <property type="gene ID" value="CBU_0497"/>
</dbReference>
<dbReference type="GeneID" id="1208381"/>
<dbReference type="KEGG" id="cbu:CBU_0497"/>
<dbReference type="PATRIC" id="fig|227377.7.peg.488"/>
<dbReference type="eggNOG" id="COG0304">
    <property type="taxonomic scope" value="Bacteria"/>
</dbReference>
<dbReference type="HOGENOM" id="CLU_000022_69_2_6"/>
<dbReference type="OrthoDB" id="9808669at2"/>
<dbReference type="UniPathway" id="UPA00094"/>
<dbReference type="Proteomes" id="UP000002671">
    <property type="component" value="Chromosome"/>
</dbReference>
<dbReference type="GO" id="GO:0005829">
    <property type="term" value="C:cytosol"/>
    <property type="evidence" value="ECO:0000318"/>
    <property type="project" value="GO_Central"/>
</dbReference>
<dbReference type="GO" id="GO:0004315">
    <property type="term" value="F:3-oxoacyl-[acyl-carrier-protein] synthase activity"/>
    <property type="evidence" value="ECO:0000318"/>
    <property type="project" value="GO_Central"/>
</dbReference>
<dbReference type="GO" id="GO:0006633">
    <property type="term" value="P:fatty acid biosynthetic process"/>
    <property type="evidence" value="ECO:0000318"/>
    <property type="project" value="GO_Central"/>
</dbReference>
<dbReference type="CDD" id="cd00834">
    <property type="entry name" value="KAS_I_II"/>
    <property type="match status" value="1"/>
</dbReference>
<dbReference type="FunFam" id="3.40.47.10:FF:000009">
    <property type="entry name" value="3-oxoacyl-[acyl-carrier-protein] synthase 2"/>
    <property type="match status" value="1"/>
</dbReference>
<dbReference type="Gene3D" id="3.40.47.10">
    <property type="match status" value="1"/>
</dbReference>
<dbReference type="InterPro" id="IPR017568">
    <property type="entry name" value="3-oxoacyl-ACP_synth-2"/>
</dbReference>
<dbReference type="InterPro" id="IPR000794">
    <property type="entry name" value="Beta-ketoacyl_synthase"/>
</dbReference>
<dbReference type="InterPro" id="IPR018201">
    <property type="entry name" value="Ketoacyl_synth_AS"/>
</dbReference>
<dbReference type="InterPro" id="IPR014031">
    <property type="entry name" value="Ketoacyl_synth_C"/>
</dbReference>
<dbReference type="InterPro" id="IPR014030">
    <property type="entry name" value="Ketoacyl_synth_N"/>
</dbReference>
<dbReference type="InterPro" id="IPR020841">
    <property type="entry name" value="PKS_Beta-ketoAc_synthase_dom"/>
</dbReference>
<dbReference type="InterPro" id="IPR016039">
    <property type="entry name" value="Thiolase-like"/>
</dbReference>
<dbReference type="NCBIfam" id="TIGR03150">
    <property type="entry name" value="fabF"/>
    <property type="match status" value="1"/>
</dbReference>
<dbReference type="NCBIfam" id="NF004970">
    <property type="entry name" value="PRK06333.1"/>
    <property type="match status" value="1"/>
</dbReference>
<dbReference type="NCBIfam" id="NF005589">
    <property type="entry name" value="PRK07314.1"/>
    <property type="match status" value="1"/>
</dbReference>
<dbReference type="PANTHER" id="PTHR11712:SF336">
    <property type="entry name" value="3-OXOACYL-[ACYL-CARRIER-PROTEIN] SYNTHASE, MITOCHONDRIAL"/>
    <property type="match status" value="1"/>
</dbReference>
<dbReference type="PANTHER" id="PTHR11712">
    <property type="entry name" value="POLYKETIDE SYNTHASE-RELATED"/>
    <property type="match status" value="1"/>
</dbReference>
<dbReference type="Pfam" id="PF00109">
    <property type="entry name" value="ketoacyl-synt"/>
    <property type="match status" value="1"/>
</dbReference>
<dbReference type="Pfam" id="PF02801">
    <property type="entry name" value="Ketoacyl-synt_C"/>
    <property type="match status" value="1"/>
</dbReference>
<dbReference type="PIRSF" id="PIRSF000447">
    <property type="entry name" value="KAS_II"/>
    <property type="match status" value="1"/>
</dbReference>
<dbReference type="SMART" id="SM00825">
    <property type="entry name" value="PKS_KS"/>
    <property type="match status" value="1"/>
</dbReference>
<dbReference type="SUPFAM" id="SSF53901">
    <property type="entry name" value="Thiolase-like"/>
    <property type="match status" value="2"/>
</dbReference>
<dbReference type="PROSITE" id="PS00606">
    <property type="entry name" value="KS3_1"/>
    <property type="match status" value="1"/>
</dbReference>
<dbReference type="PROSITE" id="PS52004">
    <property type="entry name" value="KS3_2"/>
    <property type="match status" value="1"/>
</dbReference>
<reference key="1">
    <citation type="journal article" date="2003" name="Proc. Natl. Acad. Sci. U.S.A.">
        <title>Complete genome sequence of the Q-fever pathogen, Coxiella burnetii.</title>
        <authorList>
            <person name="Seshadri R."/>
            <person name="Paulsen I.T."/>
            <person name="Eisen J.A."/>
            <person name="Read T.D."/>
            <person name="Nelson K.E."/>
            <person name="Nelson W.C."/>
            <person name="Ward N.L."/>
            <person name="Tettelin H."/>
            <person name="Davidsen T.M."/>
            <person name="Beanan M.J."/>
            <person name="DeBoy R.T."/>
            <person name="Daugherty S.C."/>
            <person name="Brinkac L.M."/>
            <person name="Madupu R."/>
            <person name="Dodson R.J."/>
            <person name="Khouri H.M."/>
            <person name="Lee K.H."/>
            <person name="Carty H.A."/>
            <person name="Scanlan D."/>
            <person name="Heinzen R.A."/>
            <person name="Thompson H.A."/>
            <person name="Samuel J.E."/>
            <person name="Fraser C.M."/>
            <person name="Heidelberg J.F."/>
        </authorList>
    </citation>
    <scope>NUCLEOTIDE SEQUENCE [LARGE SCALE GENOMIC DNA]</scope>
    <source>
        <strain>RSA 493 / Nine Mile phase I</strain>
    </source>
</reference>
<reference key="2">
    <citation type="journal article" date="2007" name="Infect. Immun.">
        <title>Proteome and antigen profiling of Coxiella burnetii developmental forms.</title>
        <authorList>
            <person name="Coleman S.A."/>
            <person name="Fischer E.R."/>
            <person name="Cockrell D.C."/>
            <person name="Voth D.E."/>
            <person name="Howe D."/>
            <person name="Mead D.J."/>
            <person name="Samuel J.E."/>
            <person name="Heinzen R.A."/>
        </authorList>
    </citation>
    <scope>IDENTIFICATION BY MASS SPECTROMETRY</scope>
    <scope>DEVELOPMENTAL STAGE</scope>
    <source>
        <strain>Nine Mile Crazy / RSA 514</strain>
    </source>
</reference>
<gene>
    <name type="primary">fabF</name>
    <name type="ordered locus">CBU_0497</name>
</gene>
<keyword id="KW-0012">Acyltransferase</keyword>
<keyword id="KW-0275">Fatty acid biosynthesis</keyword>
<keyword id="KW-0276">Fatty acid metabolism</keyword>
<keyword id="KW-0444">Lipid biosynthesis</keyword>
<keyword id="KW-0443">Lipid metabolism</keyword>
<keyword id="KW-1185">Reference proteome</keyword>
<keyword id="KW-0808">Transferase</keyword>
<organism>
    <name type="scientific">Coxiella burnetii (strain RSA 493 / Nine Mile phase I)</name>
    <dbReference type="NCBI Taxonomy" id="227377"/>
    <lineage>
        <taxon>Bacteria</taxon>
        <taxon>Pseudomonadati</taxon>
        <taxon>Pseudomonadota</taxon>
        <taxon>Gammaproteobacteria</taxon>
        <taxon>Legionellales</taxon>
        <taxon>Coxiellaceae</taxon>
        <taxon>Coxiella</taxon>
    </lineage>
</organism>
<accession>Q83E37</accession>
<evidence type="ECO:0000250" key="1">
    <source>
        <dbReference type="UniProtKB" id="P0AAI5"/>
    </source>
</evidence>
<evidence type="ECO:0000255" key="2">
    <source>
        <dbReference type="PROSITE-ProRule" id="PRU01348"/>
    </source>
</evidence>
<evidence type="ECO:0000269" key="3">
    <source>
    </source>
</evidence>
<evidence type="ECO:0000305" key="4"/>
<proteinExistence type="evidence at protein level"/>
<name>FABF_COXBU</name>